<proteinExistence type="predicted"/>
<dbReference type="EMBL" id="AY509253">
    <property type="protein sequence ID" value="AAS00939.1"/>
    <property type="molecule type" value="Genomic_DNA"/>
</dbReference>
<dbReference type="RefSeq" id="YP_024592.1">
    <property type="nucleotide sequence ID" value="NC_005881.2"/>
</dbReference>
<dbReference type="SMR" id="Q6R7H6"/>
<dbReference type="KEGG" id="vg:2948192"/>
<dbReference type="Proteomes" id="UP000007021">
    <property type="component" value="Segment"/>
</dbReference>
<accession>Q6R7H6</accession>
<keyword id="KW-1185">Reference proteome</keyword>
<protein>
    <recommendedName>
        <fullName>Uncharacterized protein ORF48</fullName>
    </recommendedName>
</protein>
<feature type="chain" id="PRO_0000385076" description="Uncharacterized protein ORF48">
    <location>
        <begin position="1"/>
        <end position="160"/>
    </location>
</feature>
<gene>
    <name type="ORF">ORF48</name>
</gene>
<organismHost>
    <name type="scientific">Magallana gigas</name>
    <name type="common">Pacific oyster</name>
    <name type="synonym">Crassostrea gigas</name>
    <dbReference type="NCBI Taxonomy" id="29159"/>
</organismHost>
<organismHost>
    <name type="scientific">Pecten maximus</name>
    <name type="common">King scallop</name>
    <name type="synonym">Pilgrim's clam</name>
    <dbReference type="NCBI Taxonomy" id="6579"/>
</organismHost>
<organism>
    <name type="scientific">Ostreid herpesvirus 1 (isolate France)</name>
    <name type="common">OsHV-1</name>
    <name type="synonym">Pacific oyster herpesvirus</name>
    <dbReference type="NCBI Taxonomy" id="654903"/>
    <lineage>
        <taxon>Viruses</taxon>
        <taxon>Duplodnaviria</taxon>
        <taxon>Heunggongvirae</taxon>
        <taxon>Peploviricota</taxon>
        <taxon>Herviviricetes</taxon>
        <taxon>Herpesvirales</taxon>
        <taxon>Malacoherpesviridae</taxon>
        <taxon>Ostreavirus</taxon>
        <taxon>Ostreavirus ostreidmalaco1</taxon>
        <taxon>Ostreid herpesvirus 1</taxon>
    </lineage>
</organism>
<sequence length="160" mass="18044">MYNTIMAGNTSIVCNNELVWETEIITNIILLKQEKISLESHKKKLDEQRRFGNTGHLILVTRLTDETINIIKAAEDEYYLLRGAISVEGVDSAFLRQPGVRASLNQLMDTLSLINDHLAITQQSSLPSDELKATVREIAVITENVKRIIILLSLLIMNIK</sequence>
<reference key="1">
    <citation type="journal article" date="2005" name="J. Gen. Virol.">
        <title>A novel class of herpesvirus with bivalve hosts.</title>
        <authorList>
            <person name="Davison A.J."/>
            <person name="Trus B.L."/>
            <person name="Cheng N."/>
            <person name="Steven A.C."/>
            <person name="Watson M.S."/>
            <person name="Cunningham C."/>
            <person name="Le Deuff R.M."/>
            <person name="Renault T."/>
        </authorList>
    </citation>
    <scope>NUCLEOTIDE SEQUENCE [LARGE SCALE GENOMIC DNA]</scope>
</reference>
<name>Y048_OSHVF</name>